<organism>
    <name type="scientific">Rhodopseudomonas palustris (strain ATCC BAA-98 / CGA009)</name>
    <dbReference type="NCBI Taxonomy" id="258594"/>
    <lineage>
        <taxon>Bacteria</taxon>
        <taxon>Pseudomonadati</taxon>
        <taxon>Pseudomonadota</taxon>
        <taxon>Alphaproteobacteria</taxon>
        <taxon>Hyphomicrobiales</taxon>
        <taxon>Nitrobacteraceae</taxon>
        <taxon>Rhodopseudomonas</taxon>
    </lineage>
</organism>
<sequence length="102" mass="11303">MAPRRISVSETCRPVLPRHARLKFDDTRQRWVILAPERVLAPDEIAVEILQLCDGACDVAAIIDALAAKYTADRAEIGRDVMAMLQDLADKGFLTEARETAP</sequence>
<keyword id="KW-0884">PQQ biosynthesis</keyword>
<reference key="1">
    <citation type="journal article" date="2004" name="Nat. Biotechnol.">
        <title>Complete genome sequence of the metabolically versatile photosynthetic bacterium Rhodopseudomonas palustris.</title>
        <authorList>
            <person name="Larimer F.W."/>
            <person name="Chain P."/>
            <person name="Hauser L."/>
            <person name="Lamerdin J.E."/>
            <person name="Malfatti S."/>
            <person name="Do L."/>
            <person name="Land M.L."/>
            <person name="Pelletier D.A."/>
            <person name="Beatty J.T."/>
            <person name="Lang A.S."/>
            <person name="Tabita F.R."/>
            <person name="Gibson J.L."/>
            <person name="Hanson T.E."/>
            <person name="Bobst C."/>
            <person name="Torres y Torres J.L."/>
            <person name="Peres C."/>
            <person name="Harrison F.H."/>
            <person name="Gibson J."/>
            <person name="Harwood C.S."/>
        </authorList>
    </citation>
    <scope>NUCLEOTIDE SEQUENCE [LARGE SCALE GENOMIC DNA]</scope>
    <source>
        <strain>ATCC BAA-98 / CGA009</strain>
    </source>
</reference>
<evidence type="ECO:0000255" key="1">
    <source>
        <dbReference type="HAMAP-Rule" id="MF_00655"/>
    </source>
</evidence>
<dbReference type="EMBL" id="BX572599">
    <property type="protein sequence ID" value="CAE27390.1"/>
    <property type="molecule type" value="Genomic_DNA"/>
</dbReference>
<dbReference type="RefSeq" id="WP_011157504.1">
    <property type="nucleotide sequence ID" value="NZ_CP116810.1"/>
</dbReference>
<dbReference type="SMR" id="Q6N8F4"/>
<dbReference type="STRING" id="258594.RPA1949"/>
<dbReference type="GeneID" id="66892993"/>
<dbReference type="eggNOG" id="COG0535">
    <property type="taxonomic scope" value="Bacteria"/>
</dbReference>
<dbReference type="HOGENOM" id="CLU_163864_0_0_5"/>
<dbReference type="PhylomeDB" id="Q6N8F4"/>
<dbReference type="UniPathway" id="UPA00539"/>
<dbReference type="GO" id="GO:0048038">
    <property type="term" value="F:quinone binding"/>
    <property type="evidence" value="ECO:0007669"/>
    <property type="project" value="InterPro"/>
</dbReference>
<dbReference type="GO" id="GO:0018189">
    <property type="term" value="P:pyrroloquinoline quinone biosynthetic process"/>
    <property type="evidence" value="ECO:0007669"/>
    <property type="project" value="UniProtKB-UniRule"/>
</dbReference>
<dbReference type="Gene3D" id="1.10.10.1150">
    <property type="entry name" value="Coenzyme PQQ synthesis protein D (PqqD)"/>
    <property type="match status" value="1"/>
</dbReference>
<dbReference type="HAMAP" id="MF_00655">
    <property type="entry name" value="PQQ_syn_PqqD"/>
    <property type="match status" value="1"/>
</dbReference>
<dbReference type="InterPro" id="IPR008792">
    <property type="entry name" value="PQQD"/>
</dbReference>
<dbReference type="InterPro" id="IPR022479">
    <property type="entry name" value="PqqD_bac"/>
</dbReference>
<dbReference type="InterPro" id="IPR041881">
    <property type="entry name" value="PqqD_sf"/>
</dbReference>
<dbReference type="NCBIfam" id="TIGR03859">
    <property type="entry name" value="PQQ_PqqD"/>
    <property type="match status" value="1"/>
</dbReference>
<dbReference type="Pfam" id="PF05402">
    <property type="entry name" value="PqqD"/>
    <property type="match status" value="1"/>
</dbReference>
<comment type="function">
    <text evidence="1">Functions as a PqqA binding protein and presents PqqA to PqqE, in the pyrroloquinoline quinone (PQQ) biosynthetic pathway.</text>
</comment>
<comment type="pathway">
    <text evidence="1">Cofactor biosynthesis; pyrroloquinoline quinone biosynthesis.</text>
</comment>
<comment type="subunit">
    <text evidence="1">Monomer. Interacts with PqqE.</text>
</comment>
<comment type="similarity">
    <text evidence="1">Belongs to the PqqD family.</text>
</comment>
<accession>Q6N8F4</accession>
<feature type="chain" id="PRO_0000219971" description="PqqA binding protein">
    <location>
        <begin position="1"/>
        <end position="102"/>
    </location>
</feature>
<name>PQQD_RHOPA</name>
<gene>
    <name evidence="1" type="primary">pqqD</name>
    <name type="ordered locus">RPA1949</name>
</gene>
<protein>
    <recommendedName>
        <fullName evidence="1">PqqA binding protein</fullName>
    </recommendedName>
    <alternativeName>
        <fullName evidence="1">Coenzyme PQQ synthesis protein D</fullName>
    </alternativeName>
    <alternativeName>
        <fullName evidence="1">Pyrroloquinoline quinone biosynthesis protein D</fullName>
    </alternativeName>
</protein>
<proteinExistence type="inferred from homology"/>